<accession>O68433</accession>
<organism>
    <name type="scientific">Legionella pneumophila</name>
    <dbReference type="NCBI Taxonomy" id="446"/>
    <lineage>
        <taxon>Bacteria</taxon>
        <taxon>Pseudomonadati</taxon>
        <taxon>Pseudomonadota</taxon>
        <taxon>Gammaproteobacteria</taxon>
        <taxon>Legionellales</taxon>
        <taxon>Legionellaceae</taxon>
        <taxon>Legionella</taxon>
    </lineage>
</organism>
<comment type="function">
    <text evidence="1">Plays an essential role in type IV pili and type II pseudopili formation by proteolytically removing the leader sequence from substrate proteins and subsequently monomethylating the alpha-amino group of the newly exposed N-terminal phenylalanine.</text>
</comment>
<comment type="catalytic activity">
    <reaction evidence="1">
        <text>Typically cleaves a -Gly-|-Phe- bond to release an N-terminal, basic peptide of 5-8 residues from type IV prepilin, and then N-methylates the new N-terminal amino group, the methyl donor being S-adenosyl-L-methionine.</text>
        <dbReference type="EC" id="3.4.23.43"/>
    </reaction>
</comment>
<comment type="cofactor">
    <cofactor evidence="1">
        <name>Zn(2+)</name>
        <dbReference type="ChEBI" id="CHEBI:29105"/>
    </cofactor>
    <text evidence="1">Zinc is required for the N-terminal methylation of the mature pilin, but not for signal peptide cleavage.</text>
</comment>
<comment type="subcellular location">
    <subcellularLocation>
        <location evidence="1">Cell inner membrane</location>
        <topology evidence="1">Multi-pass membrane protein</topology>
    </subcellularLocation>
</comment>
<comment type="similarity">
    <text evidence="3">Belongs to the peptidase A24 family.</text>
</comment>
<sequence length="287" mass="32850">MINALIINYPWFMYLVVGLFSLAVGSLLNVIIYRLPIILQEEWKEQCCELFHFEQRKEKIKLNLFLPRSFCPHCKAMVKAWQNIPLLAILVLRGRCYQCDSPFSIRYPFVETLTTVLSLYASWHFGFTIQLLFALLAIWILISLVFIDLDHQLLPDSLTLGLLWIGLIANTQNVFVSLDVAVLSCAGAYLALWLFINLFYLMTCKVCMGHGDFKLFAAFGAWLGWMYLPIILLISSITGAIIGLIYLKINGKSRDTAIPFGPFLCISGLIAMFWGDSIINWYIGYWM</sequence>
<feature type="chain" id="PRO_0000192622" description="Prepilin leader peptidase/N-methyltransferase">
    <location>
        <begin position="1"/>
        <end position="287"/>
    </location>
</feature>
<feature type="transmembrane region" description="Helical" evidence="2">
    <location>
        <begin position="12"/>
        <end position="32"/>
    </location>
</feature>
<feature type="transmembrane region" description="Helical" evidence="2">
    <location>
        <begin position="127"/>
        <end position="147"/>
    </location>
</feature>
<feature type="transmembrane region" description="Helical" evidence="2">
    <location>
        <begin position="158"/>
        <end position="178"/>
    </location>
</feature>
<feature type="transmembrane region" description="Helical" evidence="2">
    <location>
        <begin position="182"/>
        <end position="202"/>
    </location>
</feature>
<feature type="transmembrane region" description="Helical" evidence="2">
    <location>
        <begin position="215"/>
        <end position="235"/>
    </location>
</feature>
<feature type="transmembrane region" description="Helical" evidence="2">
    <location>
        <begin position="259"/>
        <end position="279"/>
    </location>
</feature>
<feature type="binding site" evidence="1">
    <location>
        <position position="71"/>
    </location>
    <ligand>
        <name>Zn(2+)</name>
        <dbReference type="ChEBI" id="CHEBI:29105"/>
    </ligand>
</feature>
<feature type="binding site" evidence="1">
    <location>
        <position position="74"/>
    </location>
    <ligand>
        <name>Zn(2+)</name>
        <dbReference type="ChEBI" id="CHEBI:29105"/>
    </ligand>
</feature>
<feature type="binding site" evidence="1">
    <location>
        <position position="96"/>
    </location>
    <ligand>
        <name>Zn(2+)</name>
        <dbReference type="ChEBI" id="CHEBI:29105"/>
    </ligand>
</feature>
<feature type="binding site" evidence="1">
    <location>
        <position position="99"/>
    </location>
    <ligand>
        <name>Zn(2+)</name>
        <dbReference type="ChEBI" id="CHEBI:29105"/>
    </ligand>
</feature>
<protein>
    <recommendedName>
        <fullName>Prepilin leader peptidase/N-methyltransferase</fullName>
    </recommendedName>
    <domain>
        <recommendedName>
            <fullName>Leader peptidase</fullName>
            <ecNumber evidence="1">3.4.23.43</ecNumber>
        </recommendedName>
        <alternativeName>
            <fullName>Prepilin peptidase</fullName>
        </alternativeName>
    </domain>
    <domain>
        <recommendedName>
            <fullName>N-methyltransferase</fullName>
            <ecNumber evidence="1">2.1.1.-</ecNumber>
        </recommendedName>
    </domain>
</protein>
<dbReference type="EC" id="3.4.23.43" evidence="1"/>
<dbReference type="EC" id="2.1.1.-" evidence="1"/>
<dbReference type="EMBL" id="AF038655">
    <property type="protein sequence ID" value="AAC12718.1"/>
    <property type="molecule type" value="Genomic_DNA"/>
</dbReference>
<dbReference type="STRING" id="91892.BIZ52_07255"/>
<dbReference type="TCDB" id="3.A.15.3.1">
    <property type="family name" value="the outer membrane protein secreting main terminal branch (mtb) family"/>
</dbReference>
<dbReference type="eggNOG" id="COG1989">
    <property type="taxonomic scope" value="Bacteria"/>
</dbReference>
<dbReference type="GO" id="GO:0005886">
    <property type="term" value="C:plasma membrane"/>
    <property type="evidence" value="ECO:0007669"/>
    <property type="project" value="UniProtKB-SubCell"/>
</dbReference>
<dbReference type="GO" id="GO:0004190">
    <property type="term" value="F:aspartic-type endopeptidase activity"/>
    <property type="evidence" value="ECO:0007669"/>
    <property type="project" value="UniProtKB-EC"/>
</dbReference>
<dbReference type="GO" id="GO:0046872">
    <property type="term" value="F:metal ion binding"/>
    <property type="evidence" value="ECO:0007669"/>
    <property type="project" value="UniProtKB-KW"/>
</dbReference>
<dbReference type="GO" id="GO:0008168">
    <property type="term" value="F:methyltransferase activity"/>
    <property type="evidence" value="ECO:0007669"/>
    <property type="project" value="UniProtKB-KW"/>
</dbReference>
<dbReference type="GO" id="GO:0032259">
    <property type="term" value="P:methylation"/>
    <property type="evidence" value="ECO:0007669"/>
    <property type="project" value="UniProtKB-KW"/>
</dbReference>
<dbReference type="GO" id="GO:0006465">
    <property type="term" value="P:signal peptide processing"/>
    <property type="evidence" value="ECO:0007669"/>
    <property type="project" value="TreeGrafter"/>
</dbReference>
<dbReference type="FunFam" id="1.20.120.1220:FF:000001">
    <property type="entry name" value="Type 4 prepilin-like proteins leader peptide-processing enzyme"/>
    <property type="match status" value="1"/>
</dbReference>
<dbReference type="Gene3D" id="1.20.120.1220">
    <property type="match status" value="1"/>
</dbReference>
<dbReference type="InterPro" id="IPR014032">
    <property type="entry name" value="Peptidase_A24A_bac"/>
</dbReference>
<dbReference type="InterPro" id="IPR000045">
    <property type="entry name" value="Prepilin_IV_endopep_pep"/>
</dbReference>
<dbReference type="InterPro" id="IPR010627">
    <property type="entry name" value="Prepilin_pept_A24_N"/>
</dbReference>
<dbReference type="InterPro" id="IPR050882">
    <property type="entry name" value="Prepilin_peptidase/N-MTase"/>
</dbReference>
<dbReference type="PANTHER" id="PTHR30487:SF0">
    <property type="entry name" value="PREPILIN LEADER PEPTIDASE_N-METHYLTRANSFERASE-RELATED"/>
    <property type="match status" value="1"/>
</dbReference>
<dbReference type="PANTHER" id="PTHR30487">
    <property type="entry name" value="TYPE 4 PREPILIN-LIKE PROTEINS LEADER PEPTIDE-PROCESSING ENZYME"/>
    <property type="match status" value="1"/>
</dbReference>
<dbReference type="Pfam" id="PF06750">
    <property type="entry name" value="A24_N_bact"/>
    <property type="match status" value="1"/>
</dbReference>
<dbReference type="Pfam" id="PF01478">
    <property type="entry name" value="Peptidase_A24"/>
    <property type="match status" value="1"/>
</dbReference>
<dbReference type="PRINTS" id="PR00864">
    <property type="entry name" value="PREPILNPTASE"/>
</dbReference>
<proteinExistence type="inferred from homology"/>
<evidence type="ECO:0000250" key="1">
    <source>
        <dbReference type="UniProtKB" id="P22610"/>
    </source>
</evidence>
<evidence type="ECO:0000255" key="2"/>
<evidence type="ECO:0000305" key="3"/>
<name>LEP4_LEGPN</name>
<reference key="1">
    <citation type="journal article" date="1998" name="Infect. Immun.">
        <title>Identification and temperature regulation of Legionella pneumophila genes involved in type IV pilus biogenesis and type II protein secretion.</title>
        <authorList>
            <person name="Liles M.R."/>
            <person name="Viswanathan V.K."/>
            <person name="Cianciotto N.P."/>
        </authorList>
    </citation>
    <scope>NUCLEOTIDE SEQUENCE [GENOMIC DNA]</scope>
    <source>
        <strain>130b / Wadsworth / Serogroup 1</strain>
    </source>
</reference>
<keyword id="KW-0997">Cell inner membrane</keyword>
<keyword id="KW-1003">Cell membrane</keyword>
<keyword id="KW-0378">Hydrolase</keyword>
<keyword id="KW-0472">Membrane</keyword>
<keyword id="KW-0479">Metal-binding</keyword>
<keyword id="KW-0489">Methyltransferase</keyword>
<keyword id="KW-0511">Multifunctional enzyme</keyword>
<keyword id="KW-0645">Protease</keyword>
<keyword id="KW-0949">S-adenosyl-L-methionine</keyword>
<keyword id="KW-0808">Transferase</keyword>
<keyword id="KW-0812">Transmembrane</keyword>
<keyword id="KW-1133">Transmembrane helix</keyword>
<keyword id="KW-0862">Zinc</keyword>
<gene>
    <name type="primary">pilD</name>
</gene>